<dbReference type="EMBL" id="CP000821">
    <property type="protein sequence ID" value="ABV38063.1"/>
    <property type="molecule type" value="Genomic_DNA"/>
</dbReference>
<dbReference type="RefSeq" id="WP_012143793.1">
    <property type="nucleotide sequence ID" value="NC_009831.1"/>
</dbReference>
<dbReference type="SMR" id="A8FYZ0"/>
<dbReference type="STRING" id="425104.Ssed_3459"/>
<dbReference type="KEGG" id="sse:Ssed_3459"/>
<dbReference type="eggNOG" id="COG0216">
    <property type="taxonomic scope" value="Bacteria"/>
</dbReference>
<dbReference type="HOGENOM" id="CLU_036856_0_1_6"/>
<dbReference type="OrthoDB" id="9806673at2"/>
<dbReference type="Proteomes" id="UP000002015">
    <property type="component" value="Chromosome"/>
</dbReference>
<dbReference type="GO" id="GO:0005737">
    <property type="term" value="C:cytoplasm"/>
    <property type="evidence" value="ECO:0007669"/>
    <property type="project" value="UniProtKB-SubCell"/>
</dbReference>
<dbReference type="GO" id="GO:0016149">
    <property type="term" value="F:translation release factor activity, codon specific"/>
    <property type="evidence" value="ECO:0007669"/>
    <property type="project" value="UniProtKB-UniRule"/>
</dbReference>
<dbReference type="FunFam" id="3.30.160.20:FF:000004">
    <property type="entry name" value="Peptide chain release factor 1"/>
    <property type="match status" value="1"/>
</dbReference>
<dbReference type="FunFam" id="3.30.70.1660:FF:000002">
    <property type="entry name" value="Peptide chain release factor 1"/>
    <property type="match status" value="1"/>
</dbReference>
<dbReference type="FunFam" id="3.30.70.1660:FF:000004">
    <property type="entry name" value="Peptide chain release factor 1"/>
    <property type="match status" value="1"/>
</dbReference>
<dbReference type="Gene3D" id="3.30.160.20">
    <property type="match status" value="1"/>
</dbReference>
<dbReference type="Gene3D" id="3.30.70.1660">
    <property type="match status" value="2"/>
</dbReference>
<dbReference type="Gene3D" id="6.10.140.1950">
    <property type="match status" value="1"/>
</dbReference>
<dbReference type="HAMAP" id="MF_00093">
    <property type="entry name" value="Rel_fac_1"/>
    <property type="match status" value="1"/>
</dbReference>
<dbReference type="InterPro" id="IPR005139">
    <property type="entry name" value="PCRF"/>
</dbReference>
<dbReference type="InterPro" id="IPR000352">
    <property type="entry name" value="Pep_chain_release_fac_I"/>
</dbReference>
<dbReference type="InterPro" id="IPR045853">
    <property type="entry name" value="Pep_chain_release_fac_I_sf"/>
</dbReference>
<dbReference type="InterPro" id="IPR050057">
    <property type="entry name" value="Prokaryotic/Mito_RF"/>
</dbReference>
<dbReference type="InterPro" id="IPR004373">
    <property type="entry name" value="RF-1"/>
</dbReference>
<dbReference type="NCBIfam" id="TIGR00019">
    <property type="entry name" value="prfA"/>
    <property type="match status" value="1"/>
</dbReference>
<dbReference type="NCBIfam" id="NF001859">
    <property type="entry name" value="PRK00591.1"/>
    <property type="match status" value="1"/>
</dbReference>
<dbReference type="PANTHER" id="PTHR43804">
    <property type="entry name" value="LD18447P"/>
    <property type="match status" value="1"/>
</dbReference>
<dbReference type="PANTHER" id="PTHR43804:SF7">
    <property type="entry name" value="LD18447P"/>
    <property type="match status" value="1"/>
</dbReference>
<dbReference type="Pfam" id="PF03462">
    <property type="entry name" value="PCRF"/>
    <property type="match status" value="1"/>
</dbReference>
<dbReference type="Pfam" id="PF00472">
    <property type="entry name" value="RF-1"/>
    <property type="match status" value="1"/>
</dbReference>
<dbReference type="SMART" id="SM00937">
    <property type="entry name" value="PCRF"/>
    <property type="match status" value="1"/>
</dbReference>
<dbReference type="SUPFAM" id="SSF75620">
    <property type="entry name" value="Release factor"/>
    <property type="match status" value="1"/>
</dbReference>
<dbReference type="PROSITE" id="PS00745">
    <property type="entry name" value="RF_PROK_I"/>
    <property type="match status" value="1"/>
</dbReference>
<gene>
    <name evidence="1" type="primary">prfA</name>
    <name type="ordered locus">Ssed_3459</name>
</gene>
<sequence length="361" mass="40454">MKDSVIRKLEGLLERNEEVLALLSDPGVISDQERFRALSKEYSQLEDVVTSFKSFQQATEDLEAAKEMASDDDPELKEMAQEEMKEAKSLLEKLEDELQILLLPKDPNDDNNCFIEIRAGAGGDEAAIFAGDLFRMYSKYVESKRWQLEVMNTNEGEHGGFKEVIAKVSGEGVYGQLKFESGGHRVQRVPETESQGRVHTSACTVVVLPEIPESEAIEINKGDLKVDTFRASGAGGQHVNKTDSAIRLTHIPSGIVVECQDQRSQHKNRAQAMSVLTARIQAVEDEKRRSAEESTRRNLVGSGDRSERIRTYNFPQGRVSEHRINLTLYRLNEVMEGELDAILEPLMLENQADMLAALSEE</sequence>
<name>RF1_SHESH</name>
<proteinExistence type="inferred from homology"/>
<accession>A8FYZ0</accession>
<reference key="1">
    <citation type="submission" date="2007-08" db="EMBL/GenBank/DDBJ databases">
        <title>Complete sequence of Shewanella sediminis HAW-EB3.</title>
        <authorList>
            <consortium name="US DOE Joint Genome Institute"/>
            <person name="Copeland A."/>
            <person name="Lucas S."/>
            <person name="Lapidus A."/>
            <person name="Barry K."/>
            <person name="Glavina del Rio T."/>
            <person name="Dalin E."/>
            <person name="Tice H."/>
            <person name="Pitluck S."/>
            <person name="Chertkov O."/>
            <person name="Brettin T."/>
            <person name="Bruce D."/>
            <person name="Detter J.C."/>
            <person name="Han C."/>
            <person name="Schmutz J."/>
            <person name="Larimer F."/>
            <person name="Land M."/>
            <person name="Hauser L."/>
            <person name="Kyrpides N."/>
            <person name="Kim E."/>
            <person name="Zhao J.-S."/>
            <person name="Richardson P."/>
        </authorList>
    </citation>
    <scope>NUCLEOTIDE SEQUENCE [LARGE SCALE GENOMIC DNA]</scope>
    <source>
        <strain>HAW-EB3</strain>
    </source>
</reference>
<keyword id="KW-0963">Cytoplasm</keyword>
<keyword id="KW-0488">Methylation</keyword>
<keyword id="KW-0648">Protein biosynthesis</keyword>
<keyword id="KW-1185">Reference proteome</keyword>
<organism>
    <name type="scientific">Shewanella sediminis (strain HAW-EB3)</name>
    <dbReference type="NCBI Taxonomy" id="425104"/>
    <lineage>
        <taxon>Bacteria</taxon>
        <taxon>Pseudomonadati</taxon>
        <taxon>Pseudomonadota</taxon>
        <taxon>Gammaproteobacteria</taxon>
        <taxon>Alteromonadales</taxon>
        <taxon>Shewanellaceae</taxon>
        <taxon>Shewanella</taxon>
    </lineage>
</organism>
<feature type="chain" id="PRO_1000075517" description="Peptide chain release factor 1">
    <location>
        <begin position="1"/>
        <end position="361"/>
    </location>
</feature>
<feature type="region of interest" description="Disordered" evidence="2">
    <location>
        <begin position="285"/>
        <end position="305"/>
    </location>
</feature>
<feature type="compositionally biased region" description="Basic and acidic residues" evidence="2">
    <location>
        <begin position="285"/>
        <end position="296"/>
    </location>
</feature>
<feature type="modified residue" description="N5-methylglutamine" evidence="1">
    <location>
        <position position="237"/>
    </location>
</feature>
<evidence type="ECO:0000255" key="1">
    <source>
        <dbReference type="HAMAP-Rule" id="MF_00093"/>
    </source>
</evidence>
<evidence type="ECO:0000256" key="2">
    <source>
        <dbReference type="SAM" id="MobiDB-lite"/>
    </source>
</evidence>
<protein>
    <recommendedName>
        <fullName evidence="1">Peptide chain release factor 1</fullName>
        <shortName evidence="1">RF-1</shortName>
    </recommendedName>
</protein>
<comment type="function">
    <text evidence="1">Peptide chain release factor 1 directs the termination of translation in response to the peptide chain termination codons UAG and UAA.</text>
</comment>
<comment type="subcellular location">
    <subcellularLocation>
        <location evidence="1">Cytoplasm</location>
    </subcellularLocation>
</comment>
<comment type="PTM">
    <text evidence="1">Methylated by PrmC. Methylation increases the termination efficiency of RF1.</text>
</comment>
<comment type="similarity">
    <text evidence="1">Belongs to the prokaryotic/mitochondrial release factor family.</text>
</comment>